<accession>Q00019</accession>
<sequence>MLKASLLSFVAFTAQVAHAAFGITTSSSAYVIDTNAPNQLKFTVSRSSCDITSIIHYGTELQYSSQGSHIGSGLGSATVTATQSGDYIKVTCVTDTLTQYMVVHNGDPIIHMATYITAEPSIGELRFIARLNSDLLPNEEPFGDVSTTADGTAIEGSDVFLVGSETRSKFYSSERFIDDQRHCIAGDAHRVCMILNQYESSSGGPFHRDINSNNGGSYNALYWYMNSGHVQTESYRMGLHGPYSMYFSRSGTPSTSIDTSFFADLDIKGYVAASGRGKVAGTASGADSSMDWVVHWYNDAAQYWTYTSSSGSFTSPAMKPGTYTMVYYQGEYAVATSSVTVSAGSTTTKNISGSVKTGTTIFKIGEWDGQPTGFRNAANQLRMHPSDSRMSSWGPLTYTVGSSALTDFPMAVFKSVNNPVTIKFTATSAQTGAATLRIGTTLSFAGGRPQATINSYTGSAPAAPTNLDSRGVTRGAYRGLGEVYDVSIPSGTIVAGTNTITINVISGSSGDTYLSPNFIFDCVELFQ</sequence>
<reference key="1">
    <citation type="journal article" date="1994" name="J. Biol. Chem.">
        <title>Cloning and characterization of two structurally and functionally divergent rhamnogalacturonases from Aspergillus aculeatus.</title>
        <authorList>
            <person name="Kofod L.V."/>
            <person name="Kauppinen S."/>
            <person name="Christgau S."/>
            <person name="Andersen L.N."/>
            <person name="Heldt-Hansen H.P."/>
            <person name="Doerreich K."/>
            <person name="Dalboege H."/>
        </authorList>
    </citation>
    <scope>NUCLEOTIDE SEQUENCE [MRNA]</scope>
    <source>
        <strain>KSM 510</strain>
    </source>
</reference>
<reference key="2">
    <citation type="journal article" date="1995" name="Glycobiology">
        <title>The backbone of the pectic polysaccharide rhamnogalacturonan I is cleaved by an endohydrolase and an endolyase.</title>
        <authorList>
            <person name="Azadi P."/>
            <person name="O'Neill M.A."/>
            <person name="Bergmann C."/>
            <person name="Darvill A.G."/>
            <person name="Albersheim P."/>
        </authorList>
    </citation>
    <scope>CHARACTERIZATION</scope>
</reference>
<reference key="3">
    <citation type="journal article" date="1996" name="Plant Physiol.">
        <title>Rhamnogalacturonase B from Aspergillus aculeatus is a rhamnogalacturonan alpha-L-rhamnopyranosyl-(1--&gt;4)-alpha-D-galactopyranosyluronide lyase.</title>
        <authorList>
            <person name="Mutter M."/>
            <person name="Colquhoun I.J."/>
            <person name="Schols H.A."/>
            <person name="Beldman G."/>
            <person name="Voragen A.G."/>
        </authorList>
    </citation>
    <scope>FUNCTION</scope>
</reference>
<reference key="4">
    <citation type="journal article" date="1998" name="Plant Physiol.">
        <title>Characterization of recombinant rhamnogalacturonan alpha-L-rhamnopyranosyl-(1,4)-alpha-D-galactopyranosyluronide lyase from Aspergillus aculeatus. An enzyme that fragments rhamnogalacturonan I regions of pectin.</title>
        <authorList>
            <person name="Mutter M."/>
            <person name="Colquhoun I.J."/>
            <person name="Beldman G."/>
            <person name="Schols H.A."/>
            <person name="Bakx E.J."/>
            <person name="Voragen A.G."/>
        </authorList>
    </citation>
    <scope>FUNCTION</scope>
    <scope>BIOPHYSICOCHEMICAL PROPERTIES</scope>
</reference>
<reference key="5">
    <citation type="journal article" date="2002" name="Acta Crystallogr. D">
        <title>A stepwise optimization of crystals of rhamnogalacturonan lyase from Aspergillus aculeatus.</title>
        <authorList>
            <person name="Kadirvelraj R."/>
            <person name="Harris P."/>
            <person name="Poulsen J.C."/>
            <person name="Kauppinen S."/>
            <person name="Larsen S."/>
        </authorList>
    </citation>
    <scope>CRYSTALLIZATION</scope>
</reference>
<reference key="6">
    <citation type="journal article" date="2004" name="FEBS Lett.">
        <title>Rhamnogalacturonan lyase reveals a unique three-domain modular structure for polysaccharide lyase family 4.</title>
        <authorList>
            <person name="McDonough M.A."/>
            <person name="Kadirvelraj R."/>
            <person name="Harris P."/>
            <person name="Poulsen J.C."/>
            <person name="Larsen S."/>
        </authorList>
    </citation>
    <scope>X-RAY CRYSTALLOGRAPHY (1.52 ANGSTROMS) OF 20-527</scope>
    <scope>DISULFIDE BOND</scope>
</reference>
<reference key="7">
    <citation type="journal article" date="2010" name="J. Mol. Biol.">
        <title>Structural and biochemical studies elucidate the mechanism of rhamnogalacturonan lyase from Aspergillus aculeatus.</title>
        <authorList>
            <person name="Jensen M.H."/>
            <person name="Otten H."/>
            <person name="Christensen U."/>
            <person name="Borchert T.V."/>
            <person name="Christensen L.L."/>
            <person name="Larsen S."/>
            <person name="Leggio L.L."/>
        </authorList>
    </citation>
    <scope>X-RAY CRYSTALLOGRAPHY (1.52 ANGSTROMS) OF 20-527 OF MUTANTS ALA-169 AND ALA-229</scope>
    <scope>DISULFIDE BOND</scope>
    <scope>FUNCTION</scope>
</reference>
<name>RGLA_ASPAC</name>
<dbReference type="EC" id="4.2.2.23"/>
<dbReference type="EMBL" id="L35500">
    <property type="protein sequence ID" value="AAA64368.1"/>
    <property type="molecule type" value="mRNA"/>
</dbReference>
<dbReference type="PIR" id="B55415">
    <property type="entry name" value="B55415"/>
</dbReference>
<dbReference type="PDB" id="1NKG">
    <property type="method" value="X-ray"/>
    <property type="resolution" value="1.50 A"/>
    <property type="chains" value="A=20-527"/>
</dbReference>
<dbReference type="PDB" id="2XHN">
    <property type="method" value="X-ray"/>
    <property type="resolution" value="1.52 A"/>
    <property type="chains" value="A/B=20-527"/>
</dbReference>
<dbReference type="PDB" id="3NJV">
    <property type="method" value="X-ray"/>
    <property type="resolution" value="2.40 A"/>
    <property type="chains" value="A=20-527"/>
</dbReference>
<dbReference type="PDB" id="3NJX">
    <property type="method" value="X-ray"/>
    <property type="resolution" value="1.94 A"/>
    <property type="chains" value="A=20-527"/>
</dbReference>
<dbReference type="PDBsum" id="1NKG"/>
<dbReference type="PDBsum" id="2XHN"/>
<dbReference type="PDBsum" id="3NJV"/>
<dbReference type="PDBsum" id="3NJX"/>
<dbReference type="SMR" id="Q00019"/>
<dbReference type="CAZy" id="PL4">
    <property type="family name" value="Polysaccharide Lyase Family 4"/>
</dbReference>
<dbReference type="GlyCosmos" id="Q00019">
    <property type="glycosylation" value="1 site, No reported glycans"/>
</dbReference>
<dbReference type="KEGG" id="ag:AAA64368"/>
<dbReference type="VEuPathDB" id="FungiDB:ASPACDRAFT_35293"/>
<dbReference type="BioCyc" id="MetaCyc:MONOMER-16403"/>
<dbReference type="BRENDA" id="4.2.2.23">
    <property type="organism ID" value="488"/>
</dbReference>
<dbReference type="EvolutionaryTrace" id="Q00019"/>
<dbReference type="GO" id="GO:0005576">
    <property type="term" value="C:extracellular region"/>
    <property type="evidence" value="ECO:0007669"/>
    <property type="project" value="UniProtKB-SubCell"/>
</dbReference>
<dbReference type="GO" id="GO:0030246">
    <property type="term" value="F:carbohydrate binding"/>
    <property type="evidence" value="ECO:0007669"/>
    <property type="project" value="InterPro"/>
</dbReference>
<dbReference type="GO" id="GO:0102210">
    <property type="term" value="F:rhamnogalacturonan endolyase activity"/>
    <property type="evidence" value="ECO:0007669"/>
    <property type="project" value="UniProtKB-EC"/>
</dbReference>
<dbReference type="GO" id="GO:0071555">
    <property type="term" value="P:cell wall organization"/>
    <property type="evidence" value="ECO:0007669"/>
    <property type="project" value="UniProtKB-KW"/>
</dbReference>
<dbReference type="GO" id="GO:0045490">
    <property type="term" value="P:pectin catabolic process"/>
    <property type="evidence" value="ECO:0007669"/>
    <property type="project" value="TreeGrafter"/>
</dbReference>
<dbReference type="CDD" id="cd10317">
    <property type="entry name" value="RGL4_C"/>
    <property type="match status" value="1"/>
</dbReference>
<dbReference type="CDD" id="cd10316">
    <property type="entry name" value="RGL4_M"/>
    <property type="match status" value="1"/>
</dbReference>
<dbReference type="CDD" id="cd10320">
    <property type="entry name" value="RGL4_N"/>
    <property type="match status" value="1"/>
</dbReference>
<dbReference type="FunFam" id="2.60.120.260:FF:000102">
    <property type="entry name" value="Rhamnogalacturonate lyase A"/>
    <property type="match status" value="1"/>
</dbReference>
<dbReference type="FunFam" id="2.60.40.1120:FF:000017">
    <property type="entry name" value="Rhamnogalacturonate lyase A"/>
    <property type="match status" value="1"/>
</dbReference>
<dbReference type="FunFam" id="2.70.98.10:FF:000020">
    <property type="entry name" value="Rhamnogalacturonate lyase A"/>
    <property type="match status" value="1"/>
</dbReference>
<dbReference type="Gene3D" id="2.70.98.10">
    <property type="match status" value="1"/>
</dbReference>
<dbReference type="Gene3D" id="2.60.40.1120">
    <property type="entry name" value="Carboxypeptidase-like, regulatory domain"/>
    <property type="match status" value="1"/>
</dbReference>
<dbReference type="Gene3D" id="2.60.120.260">
    <property type="entry name" value="Galactose-binding domain-like"/>
    <property type="match status" value="1"/>
</dbReference>
<dbReference type="InterPro" id="IPR013784">
    <property type="entry name" value="Carb-bd-like_fold"/>
</dbReference>
<dbReference type="InterPro" id="IPR011013">
    <property type="entry name" value="Gal_mutarotase_sf_dom"/>
</dbReference>
<dbReference type="InterPro" id="IPR008979">
    <property type="entry name" value="Galactose-bd-like_sf"/>
</dbReference>
<dbReference type="InterPro" id="IPR014718">
    <property type="entry name" value="GH-type_carb-bd"/>
</dbReference>
<dbReference type="InterPro" id="IPR029413">
    <property type="entry name" value="RG-lyase_II"/>
</dbReference>
<dbReference type="InterPro" id="IPR029411">
    <property type="entry name" value="RG-lyase_III"/>
</dbReference>
<dbReference type="InterPro" id="IPR016590">
    <property type="entry name" value="Rhamnogalacturonase_B"/>
</dbReference>
<dbReference type="InterPro" id="IPR015364">
    <property type="entry name" value="RhgB_N"/>
</dbReference>
<dbReference type="PANTHER" id="PTHR36574">
    <property type="entry name" value="RHAMNOGALACTURONATE LYASE-RELATED"/>
    <property type="match status" value="1"/>
</dbReference>
<dbReference type="PANTHER" id="PTHR36574:SF1">
    <property type="entry name" value="RHAMNOGALACTURONATE LYASE-RELATED"/>
    <property type="match status" value="1"/>
</dbReference>
<dbReference type="Pfam" id="PF14683">
    <property type="entry name" value="CBM-like"/>
    <property type="match status" value="1"/>
</dbReference>
<dbReference type="Pfam" id="PF14686">
    <property type="entry name" value="fn3_3"/>
    <property type="match status" value="1"/>
</dbReference>
<dbReference type="Pfam" id="PF09284">
    <property type="entry name" value="RhgB_N"/>
    <property type="match status" value="1"/>
</dbReference>
<dbReference type="PIRSF" id="PIRSF011794">
    <property type="entry name" value="Rhamnogalacturonase_B"/>
    <property type="match status" value="1"/>
</dbReference>
<dbReference type="SUPFAM" id="SSF74650">
    <property type="entry name" value="Galactose mutarotase-like"/>
    <property type="match status" value="1"/>
</dbReference>
<dbReference type="SUPFAM" id="SSF49785">
    <property type="entry name" value="Galactose-binding domain-like"/>
    <property type="match status" value="1"/>
</dbReference>
<dbReference type="SUPFAM" id="SSF49452">
    <property type="entry name" value="Starch-binding domain-like"/>
    <property type="match status" value="1"/>
</dbReference>
<keyword id="KW-0002">3D-structure</keyword>
<keyword id="KW-0119">Carbohydrate metabolism</keyword>
<keyword id="KW-0961">Cell wall biogenesis/degradation</keyword>
<keyword id="KW-1015">Disulfide bond</keyword>
<keyword id="KW-0325">Glycoprotein</keyword>
<keyword id="KW-0456">Lyase</keyword>
<keyword id="KW-0624">Polysaccharide degradation</keyword>
<keyword id="KW-0964">Secreted</keyword>
<keyword id="KW-0732">Signal</keyword>
<feature type="signal peptide">
    <location>
        <begin position="1"/>
        <end position="19"/>
    </location>
</feature>
<feature type="chain" id="PRO_0000024912" description="Rhamnogalacturonate lyase A">
    <location>
        <begin position="20"/>
        <end position="527"/>
    </location>
</feature>
<feature type="glycosylation site" description="N-linked (GlcNAc...) asparagine" evidence="2">
    <location>
        <position position="350"/>
    </location>
</feature>
<feature type="disulfide bond">
    <location>
        <begin position="49"/>
        <end position="92"/>
    </location>
</feature>
<feature type="disulfide bond">
    <location>
        <begin position="183"/>
        <end position="192"/>
    </location>
</feature>
<feature type="mutagenesis site" description="Impairs enzyme activity.">
    <original>K</original>
    <variation>A</variation>
    <location>
        <position position="169"/>
    </location>
</feature>
<feature type="mutagenesis site" description="Impairs enzyme activity.">
    <original>H</original>
    <variation>A</variation>
    <location>
        <position position="229"/>
    </location>
</feature>
<feature type="strand" evidence="7">
    <location>
        <begin position="22"/>
        <end position="25"/>
    </location>
</feature>
<feature type="strand" evidence="7">
    <location>
        <begin position="27"/>
        <end position="33"/>
    </location>
</feature>
<feature type="strand" evidence="7">
    <location>
        <begin position="40"/>
        <end position="45"/>
    </location>
</feature>
<feature type="turn" evidence="7">
    <location>
        <begin position="46"/>
        <end position="48"/>
    </location>
</feature>
<feature type="strand" evidence="7">
    <location>
        <begin position="51"/>
        <end position="56"/>
    </location>
</feature>
<feature type="strand" evidence="7">
    <location>
        <begin position="64"/>
        <end position="66"/>
    </location>
</feature>
<feature type="strand" evidence="7">
    <location>
        <begin position="68"/>
        <end position="70"/>
    </location>
</feature>
<feature type="strand" evidence="7">
    <location>
        <begin position="78"/>
        <end position="84"/>
    </location>
</feature>
<feature type="strand" evidence="7">
    <location>
        <begin position="87"/>
        <end position="93"/>
    </location>
</feature>
<feature type="strand" evidence="7">
    <location>
        <begin position="95"/>
        <end position="104"/>
    </location>
</feature>
<feature type="strand" evidence="7">
    <location>
        <begin position="109"/>
        <end position="118"/>
    </location>
</feature>
<feature type="strand" evidence="7">
    <location>
        <begin position="125"/>
        <end position="131"/>
    </location>
</feature>
<feature type="turn" evidence="7">
    <location>
        <begin position="133"/>
        <end position="135"/>
    </location>
</feature>
<feature type="strand" evidence="7">
    <location>
        <begin position="138"/>
        <end position="140"/>
    </location>
</feature>
<feature type="helix" evidence="7">
    <location>
        <begin position="143"/>
        <end position="146"/>
    </location>
</feature>
<feature type="strand" evidence="7">
    <location>
        <begin position="152"/>
        <end position="155"/>
    </location>
</feature>
<feature type="turn" evidence="7">
    <location>
        <begin position="156"/>
        <end position="158"/>
    </location>
</feature>
<feature type="strand" evidence="7">
    <location>
        <begin position="159"/>
        <end position="162"/>
    </location>
</feature>
<feature type="strand" evidence="7">
    <location>
        <begin position="165"/>
        <end position="168"/>
    </location>
</feature>
<feature type="helix" evidence="7">
    <location>
        <begin position="169"/>
        <end position="172"/>
    </location>
</feature>
<feature type="helix" evidence="7">
    <location>
        <begin position="176"/>
        <end position="178"/>
    </location>
</feature>
<feature type="strand" evidence="7">
    <location>
        <begin position="180"/>
        <end position="185"/>
    </location>
</feature>
<feature type="strand" evidence="7">
    <location>
        <begin position="190"/>
        <end position="194"/>
    </location>
</feature>
<feature type="strand" evidence="7">
    <location>
        <begin position="212"/>
        <end position="214"/>
    </location>
</feature>
<feature type="strand" evidence="7">
    <location>
        <begin position="219"/>
        <end position="226"/>
    </location>
</feature>
<feature type="strand" evidence="7">
    <location>
        <begin position="238"/>
        <end position="250"/>
    </location>
</feature>
<feature type="helix" evidence="7">
    <location>
        <begin position="260"/>
        <end position="264"/>
    </location>
</feature>
<feature type="helix" evidence="7">
    <location>
        <begin position="273"/>
        <end position="275"/>
    </location>
</feature>
<feature type="strand" evidence="7">
    <location>
        <begin position="277"/>
        <end position="286"/>
    </location>
</feature>
<feature type="strand" evidence="7">
    <location>
        <begin position="292"/>
        <end position="297"/>
    </location>
</feature>
<feature type="strand" evidence="7">
    <location>
        <begin position="302"/>
        <end position="306"/>
    </location>
</feature>
<feature type="strand" evidence="7">
    <location>
        <begin position="312"/>
        <end position="314"/>
    </location>
</feature>
<feature type="strand" evidence="7">
    <location>
        <begin position="320"/>
        <end position="329"/>
    </location>
</feature>
<feature type="strand" evidence="7">
    <location>
        <begin position="332"/>
        <end position="341"/>
    </location>
</feature>
<feature type="strand" evidence="7">
    <location>
        <begin position="346"/>
        <end position="348"/>
    </location>
</feature>
<feature type="strand" evidence="7">
    <location>
        <begin position="359"/>
        <end position="365"/>
    </location>
</feature>
<feature type="strand" evidence="7">
    <location>
        <begin position="367"/>
        <end position="370"/>
    </location>
</feature>
<feature type="helix" evidence="7">
    <location>
        <begin position="377"/>
        <end position="380"/>
    </location>
</feature>
<feature type="strand" evidence="7">
    <location>
        <begin position="397"/>
        <end position="399"/>
    </location>
</feature>
<feature type="turn" evidence="7">
    <location>
        <begin position="400"/>
        <end position="402"/>
    </location>
</feature>
<feature type="helix" evidence="7">
    <location>
        <begin position="405"/>
        <end position="407"/>
    </location>
</feature>
<feature type="strand" evidence="7">
    <location>
        <begin position="408"/>
        <end position="413"/>
    </location>
</feature>
<feature type="turn" evidence="7">
    <location>
        <begin position="414"/>
        <end position="416"/>
    </location>
</feature>
<feature type="strand" evidence="7">
    <location>
        <begin position="420"/>
        <end position="426"/>
    </location>
</feature>
<feature type="helix" evidence="7">
    <location>
        <begin position="428"/>
        <end position="430"/>
    </location>
</feature>
<feature type="strand" evidence="7">
    <location>
        <begin position="434"/>
        <end position="444"/>
    </location>
</feature>
<feature type="strand" evidence="7">
    <location>
        <begin position="448"/>
        <end position="453"/>
    </location>
</feature>
<feature type="helix" evidence="7">
    <location>
        <begin position="472"/>
        <end position="474"/>
    </location>
</feature>
<feature type="strand" evidence="7">
    <location>
        <begin position="483"/>
        <end position="488"/>
    </location>
</feature>
<feature type="strand" evidence="7">
    <location>
        <begin position="495"/>
        <end position="505"/>
    </location>
</feature>
<feature type="helix" evidence="7">
    <location>
        <begin position="512"/>
        <end position="514"/>
    </location>
</feature>
<feature type="strand" evidence="7">
    <location>
        <begin position="515"/>
        <end position="526"/>
    </location>
</feature>
<comment type="function">
    <text evidence="3 4 5">Pectinolytic enzyme that has a positive effect in the apple hot-mash liquefaction process. This endolyase hydrolyzes the alpha-L-rhamnopyranosyl-(1,4)-alpha-D-galacturonopyranosyl glycosidic linkage by beta-elimination, thereby generating oligosaccharides terminating at the non-reducing end with a hex-4-enopyranosyluronic acid residue.</text>
</comment>
<comment type="catalytic activity">
    <reaction>
        <text>Endotype eliminative cleavage of L-alpha-rhamnopyranosyl-(1-&gt;4)-alpha-D-galactopyranosyluronic acid bonds of rhamnogalacturonan I domains in ramified hairy regions of pectin leaving L-rhamnopyranose at the reducing end and 4-deoxy-4,5-unsaturated D-galactopyranosyluronic acid at the non-reducing end.</text>
        <dbReference type="EC" id="4.2.2.23"/>
    </reaction>
</comment>
<comment type="biophysicochemical properties">
    <phDependence>
        <text evidence="5">Optimum pH is 6.0, enzymatic activity becomes unstable below this value.</text>
    </phDependence>
    <temperatureDependence>
        <text evidence="5">Optimum temperature is 50 degrees Celsius.</text>
    </temperatureDependence>
</comment>
<comment type="subcellular location">
    <subcellularLocation>
        <location evidence="1">Secreted</location>
    </subcellularLocation>
</comment>
<comment type="similarity">
    <text evidence="6">Belongs to the polysaccharide lyase 4 family.</text>
</comment>
<evidence type="ECO:0000250" key="1"/>
<evidence type="ECO:0000255" key="2"/>
<evidence type="ECO:0000269" key="3">
    <source>
    </source>
</evidence>
<evidence type="ECO:0000269" key="4">
    <source>
    </source>
</evidence>
<evidence type="ECO:0000269" key="5">
    <source>
    </source>
</evidence>
<evidence type="ECO:0000305" key="6"/>
<evidence type="ECO:0007829" key="7">
    <source>
        <dbReference type="PDB" id="1NKG"/>
    </source>
</evidence>
<gene>
    <name type="primary">rglA</name>
    <name type="synonym">RGL4</name>
</gene>
<proteinExistence type="evidence at protein level"/>
<organism>
    <name type="scientific">Aspergillus aculeatus</name>
    <dbReference type="NCBI Taxonomy" id="5053"/>
    <lineage>
        <taxon>Eukaryota</taxon>
        <taxon>Fungi</taxon>
        <taxon>Dikarya</taxon>
        <taxon>Ascomycota</taxon>
        <taxon>Pezizomycotina</taxon>
        <taxon>Eurotiomycetes</taxon>
        <taxon>Eurotiomycetidae</taxon>
        <taxon>Eurotiales</taxon>
        <taxon>Aspergillaceae</taxon>
        <taxon>Aspergillus</taxon>
        <taxon>Aspergillus subgen. Circumdati</taxon>
    </lineage>
</organism>
<protein>
    <recommendedName>
        <fullName>Rhamnogalacturonate lyase A</fullName>
        <ecNumber>4.2.2.23</ecNumber>
    </recommendedName>
    <alternativeName>
        <fullName>Rhamnogalacturonan lyase</fullName>
    </alternativeName>
</protein>